<gene>
    <name evidence="1" type="primary">guaAA</name>
    <name type="ordered locus">VNG_0228G</name>
</gene>
<dbReference type="EC" id="6.3.5.2" evidence="1"/>
<dbReference type="EMBL" id="AE004437">
    <property type="protein sequence ID" value="AAG18832.1"/>
    <property type="molecule type" value="Genomic_DNA"/>
</dbReference>
<dbReference type="PIR" id="D84183">
    <property type="entry name" value="D84183"/>
</dbReference>
<dbReference type="RefSeq" id="WP_010902125.1">
    <property type="nucleotide sequence ID" value="NC_002607.1"/>
</dbReference>
<dbReference type="SMR" id="Q9HSH4"/>
<dbReference type="FunCoup" id="Q9HSH4">
    <property type="interactions" value="20"/>
</dbReference>
<dbReference type="STRING" id="64091.VNG_0228G"/>
<dbReference type="MEROPS" id="C26.A31"/>
<dbReference type="PaxDb" id="64091-VNG_0228G"/>
<dbReference type="KEGG" id="hal:VNG_0228G"/>
<dbReference type="PATRIC" id="fig|64091.14.peg.165"/>
<dbReference type="HOGENOM" id="CLU_014340_1_4_2"/>
<dbReference type="InParanoid" id="Q9HSH4"/>
<dbReference type="OrthoDB" id="10772at2157"/>
<dbReference type="PhylomeDB" id="Q9HSH4"/>
<dbReference type="UniPathway" id="UPA00189">
    <property type="reaction ID" value="UER00296"/>
</dbReference>
<dbReference type="Proteomes" id="UP000000554">
    <property type="component" value="Chromosome"/>
</dbReference>
<dbReference type="GO" id="GO:0005524">
    <property type="term" value="F:ATP binding"/>
    <property type="evidence" value="ECO:0007669"/>
    <property type="project" value="UniProtKB-KW"/>
</dbReference>
<dbReference type="GO" id="GO:0003922">
    <property type="term" value="F:GMP synthase (glutamine-hydrolyzing) activity"/>
    <property type="evidence" value="ECO:0007669"/>
    <property type="project" value="UniProtKB-UniRule"/>
</dbReference>
<dbReference type="CDD" id="cd01742">
    <property type="entry name" value="GATase1_GMP_Synthase"/>
    <property type="match status" value="1"/>
</dbReference>
<dbReference type="FunFam" id="3.40.50.880:FF:000047">
    <property type="entry name" value="GMP synthase [glutamine-hydrolyzing] subunit A"/>
    <property type="match status" value="1"/>
</dbReference>
<dbReference type="Gene3D" id="3.40.50.880">
    <property type="match status" value="1"/>
</dbReference>
<dbReference type="HAMAP" id="MF_01510">
    <property type="entry name" value="GMP_synthase_A"/>
    <property type="match status" value="1"/>
</dbReference>
<dbReference type="InterPro" id="IPR029062">
    <property type="entry name" value="Class_I_gatase-like"/>
</dbReference>
<dbReference type="InterPro" id="IPR017926">
    <property type="entry name" value="GATASE"/>
</dbReference>
<dbReference type="InterPro" id="IPR004739">
    <property type="entry name" value="GMP_synth_GATase"/>
</dbReference>
<dbReference type="InterPro" id="IPR023686">
    <property type="entry name" value="GMP_synthase_A"/>
</dbReference>
<dbReference type="NCBIfam" id="TIGR00888">
    <property type="entry name" value="guaA_Nterm"/>
    <property type="match status" value="1"/>
</dbReference>
<dbReference type="NCBIfam" id="NF001975">
    <property type="entry name" value="PRK00758.1"/>
    <property type="match status" value="1"/>
</dbReference>
<dbReference type="PANTHER" id="PTHR11922:SF2">
    <property type="entry name" value="GMP SYNTHASE [GLUTAMINE-HYDROLYZING]"/>
    <property type="match status" value="1"/>
</dbReference>
<dbReference type="PANTHER" id="PTHR11922">
    <property type="entry name" value="GMP SYNTHASE-RELATED"/>
    <property type="match status" value="1"/>
</dbReference>
<dbReference type="Pfam" id="PF00117">
    <property type="entry name" value="GATase"/>
    <property type="match status" value="1"/>
</dbReference>
<dbReference type="PRINTS" id="PR00097">
    <property type="entry name" value="ANTSNTHASEII"/>
</dbReference>
<dbReference type="PRINTS" id="PR00096">
    <property type="entry name" value="GATASE"/>
</dbReference>
<dbReference type="SUPFAM" id="SSF52317">
    <property type="entry name" value="Class I glutamine amidotransferase-like"/>
    <property type="match status" value="1"/>
</dbReference>
<dbReference type="PROSITE" id="PS51273">
    <property type="entry name" value="GATASE_TYPE_1"/>
    <property type="match status" value="1"/>
</dbReference>
<sequence length="183" mass="19555">MTHILVVDNHGQFTHLEHRLLRDMDGVTVDLTDNTTPPADIDADGLVLSGGPTMADIGHCREYLTLDVPILGVCLGHQLIADELGGRIEAGDYGGYADVTVSISDADDPLVGSLAPDTRVWASHADEVVAVPDGFTITAESDICGVEAMGDTDRDLYGVQWHPEVAHTEEGEAVFENFVAICE</sequence>
<accession>Q9HSH4</accession>
<keyword id="KW-0067">ATP-binding</keyword>
<keyword id="KW-0315">Glutamine amidotransferase</keyword>
<keyword id="KW-0332">GMP biosynthesis</keyword>
<keyword id="KW-0436">Ligase</keyword>
<keyword id="KW-0547">Nucleotide-binding</keyword>
<keyword id="KW-0658">Purine biosynthesis</keyword>
<keyword id="KW-1185">Reference proteome</keyword>
<proteinExistence type="inferred from homology"/>
<reference key="1">
    <citation type="journal article" date="2000" name="Proc. Natl. Acad. Sci. U.S.A.">
        <title>Genome sequence of Halobacterium species NRC-1.</title>
        <authorList>
            <person name="Ng W.V."/>
            <person name="Kennedy S.P."/>
            <person name="Mahairas G.G."/>
            <person name="Berquist B."/>
            <person name="Pan M."/>
            <person name="Shukla H.D."/>
            <person name="Lasky S.R."/>
            <person name="Baliga N.S."/>
            <person name="Thorsson V."/>
            <person name="Sbrogna J."/>
            <person name="Swartzell S."/>
            <person name="Weir D."/>
            <person name="Hall J."/>
            <person name="Dahl T.A."/>
            <person name="Welti R."/>
            <person name="Goo Y.A."/>
            <person name="Leithauser B."/>
            <person name="Keller K."/>
            <person name="Cruz R."/>
            <person name="Danson M.J."/>
            <person name="Hough D.W."/>
            <person name="Maddocks D.G."/>
            <person name="Jablonski P.E."/>
            <person name="Krebs M.P."/>
            <person name="Angevine C.M."/>
            <person name="Dale H."/>
            <person name="Isenbarger T.A."/>
            <person name="Peck R.F."/>
            <person name="Pohlschroder M."/>
            <person name="Spudich J.L."/>
            <person name="Jung K.-H."/>
            <person name="Alam M."/>
            <person name="Freitas T."/>
            <person name="Hou S."/>
            <person name="Daniels C.J."/>
            <person name="Dennis P.P."/>
            <person name="Omer A.D."/>
            <person name="Ebhardt H."/>
            <person name="Lowe T.M."/>
            <person name="Liang P."/>
            <person name="Riley M."/>
            <person name="Hood L."/>
            <person name="DasSarma S."/>
        </authorList>
    </citation>
    <scope>NUCLEOTIDE SEQUENCE [LARGE SCALE GENOMIC DNA]</scope>
    <source>
        <strain>ATCC 700922 / JCM 11081 / NRC-1</strain>
    </source>
</reference>
<comment type="function">
    <text evidence="1">Catalyzes the synthesis of GMP from XMP.</text>
</comment>
<comment type="catalytic activity">
    <reaction evidence="1">
        <text>XMP + L-glutamine + ATP + H2O = GMP + L-glutamate + AMP + diphosphate + 2 H(+)</text>
        <dbReference type="Rhea" id="RHEA:11680"/>
        <dbReference type="ChEBI" id="CHEBI:15377"/>
        <dbReference type="ChEBI" id="CHEBI:15378"/>
        <dbReference type="ChEBI" id="CHEBI:29985"/>
        <dbReference type="ChEBI" id="CHEBI:30616"/>
        <dbReference type="ChEBI" id="CHEBI:33019"/>
        <dbReference type="ChEBI" id="CHEBI:57464"/>
        <dbReference type="ChEBI" id="CHEBI:58115"/>
        <dbReference type="ChEBI" id="CHEBI:58359"/>
        <dbReference type="ChEBI" id="CHEBI:456215"/>
        <dbReference type="EC" id="6.3.5.2"/>
    </reaction>
</comment>
<comment type="pathway">
    <text evidence="1">Purine metabolism; GMP biosynthesis; GMP from XMP (L-Gln route): step 1/1.</text>
</comment>
<comment type="subunit">
    <text evidence="1">Heterodimer composed of a glutamine amidotransferase subunit (A) and a GMP-binding subunit (B).</text>
</comment>
<protein>
    <recommendedName>
        <fullName evidence="1">GMP synthase [glutamine-hydrolyzing] subunit A</fullName>
        <ecNumber evidence="1">6.3.5.2</ecNumber>
    </recommendedName>
    <alternativeName>
        <fullName evidence="1">Glutamine amidotransferase</fullName>
    </alternativeName>
</protein>
<feature type="chain" id="PRO_0000140219" description="GMP synthase [glutamine-hydrolyzing] subunit A">
    <location>
        <begin position="1"/>
        <end position="183"/>
    </location>
</feature>
<feature type="domain" description="Glutamine amidotransferase type-1" evidence="1">
    <location>
        <begin position="3"/>
        <end position="183"/>
    </location>
</feature>
<feature type="active site" description="Nucleophile" evidence="1">
    <location>
        <position position="74"/>
    </location>
</feature>
<feature type="active site" evidence="1">
    <location>
        <position position="162"/>
    </location>
</feature>
<feature type="active site" evidence="1">
    <location>
        <position position="164"/>
    </location>
</feature>
<name>GUAAA_HALSA</name>
<evidence type="ECO:0000255" key="1">
    <source>
        <dbReference type="HAMAP-Rule" id="MF_01510"/>
    </source>
</evidence>
<organism>
    <name type="scientific">Halobacterium salinarum (strain ATCC 700922 / JCM 11081 / NRC-1)</name>
    <name type="common">Halobacterium halobium</name>
    <dbReference type="NCBI Taxonomy" id="64091"/>
    <lineage>
        <taxon>Archaea</taxon>
        <taxon>Methanobacteriati</taxon>
        <taxon>Methanobacteriota</taxon>
        <taxon>Stenosarchaea group</taxon>
        <taxon>Halobacteria</taxon>
        <taxon>Halobacteriales</taxon>
        <taxon>Halobacteriaceae</taxon>
        <taxon>Halobacterium</taxon>
        <taxon>Halobacterium salinarum NRC-34001</taxon>
    </lineage>
</organism>